<name>RNH3_STRP6</name>
<comment type="function">
    <text evidence="1">Endonuclease that specifically degrades the RNA of RNA-DNA hybrids.</text>
</comment>
<comment type="catalytic activity">
    <reaction evidence="1">
        <text>Endonucleolytic cleavage to 5'-phosphomonoester.</text>
        <dbReference type="EC" id="3.1.26.4"/>
    </reaction>
</comment>
<comment type="cofactor">
    <cofactor evidence="1">
        <name>Mn(2+)</name>
        <dbReference type="ChEBI" id="CHEBI:29035"/>
    </cofactor>
    <cofactor evidence="1">
        <name>Mg(2+)</name>
        <dbReference type="ChEBI" id="CHEBI:18420"/>
    </cofactor>
    <text evidence="1">Manganese or magnesium. Binds 1 divalent metal ion per monomer in the absence of substrate. May bind a second metal ion after substrate binding.</text>
</comment>
<comment type="subcellular location">
    <subcellularLocation>
        <location evidence="1">Cytoplasm</location>
    </subcellularLocation>
</comment>
<comment type="similarity">
    <text evidence="1">Belongs to the RNase HII family. RnhC subfamily.</text>
</comment>
<protein>
    <recommendedName>
        <fullName evidence="1">Ribonuclease HIII</fullName>
        <shortName evidence="1">RNase HIII</shortName>
        <ecNumber evidence="1">3.1.26.4</ecNumber>
    </recommendedName>
</protein>
<organism>
    <name type="scientific">Streptococcus pyogenes serotype M6 (strain ATCC BAA-946 / MGAS10394)</name>
    <dbReference type="NCBI Taxonomy" id="286636"/>
    <lineage>
        <taxon>Bacteria</taxon>
        <taxon>Bacillati</taxon>
        <taxon>Bacillota</taxon>
        <taxon>Bacilli</taxon>
        <taxon>Lactobacillales</taxon>
        <taxon>Streptococcaceae</taxon>
        <taxon>Streptococcus</taxon>
    </lineage>
</organism>
<evidence type="ECO:0000255" key="1">
    <source>
        <dbReference type="HAMAP-Rule" id="MF_00053"/>
    </source>
</evidence>
<evidence type="ECO:0000255" key="2">
    <source>
        <dbReference type="PROSITE-ProRule" id="PRU01319"/>
    </source>
</evidence>
<feature type="chain" id="PRO_0000111705" description="Ribonuclease HIII">
    <location>
        <begin position="1"/>
        <end position="300"/>
    </location>
</feature>
<feature type="domain" description="RNase H type-2" evidence="2">
    <location>
        <begin position="83"/>
        <end position="300"/>
    </location>
</feature>
<feature type="binding site" evidence="1">
    <location>
        <position position="89"/>
    </location>
    <ligand>
        <name>a divalent metal cation</name>
        <dbReference type="ChEBI" id="CHEBI:60240"/>
    </ligand>
</feature>
<feature type="binding site" evidence="1">
    <location>
        <position position="90"/>
    </location>
    <ligand>
        <name>a divalent metal cation</name>
        <dbReference type="ChEBI" id="CHEBI:60240"/>
    </ligand>
</feature>
<feature type="binding site" evidence="1">
    <location>
        <position position="194"/>
    </location>
    <ligand>
        <name>a divalent metal cation</name>
        <dbReference type="ChEBI" id="CHEBI:60240"/>
    </ligand>
</feature>
<keyword id="KW-0963">Cytoplasm</keyword>
<keyword id="KW-0255">Endonuclease</keyword>
<keyword id="KW-0378">Hydrolase</keyword>
<keyword id="KW-0460">Magnesium</keyword>
<keyword id="KW-0479">Metal-binding</keyword>
<keyword id="KW-0540">Nuclease</keyword>
<reference key="1">
    <citation type="journal article" date="2004" name="J. Infect. Dis.">
        <title>Progress toward characterization of the group A Streptococcus metagenome: complete genome sequence of a macrolide-resistant serotype M6 strain.</title>
        <authorList>
            <person name="Banks D.J."/>
            <person name="Porcella S.F."/>
            <person name="Barbian K.D."/>
            <person name="Beres S.B."/>
            <person name="Philips L.E."/>
            <person name="Voyich J.M."/>
            <person name="DeLeo F.R."/>
            <person name="Martin J.M."/>
            <person name="Somerville G.A."/>
            <person name="Musser J.M."/>
        </authorList>
    </citation>
    <scope>NUCLEOTIDE SEQUENCE [LARGE SCALE GENOMIC DNA]</scope>
    <source>
        <strain>ATCC BAA-946 / MGAS10394</strain>
    </source>
</reference>
<dbReference type="EC" id="3.1.26.4" evidence="1"/>
<dbReference type="EMBL" id="CP000003">
    <property type="protein sequence ID" value="AAT87711.1"/>
    <property type="molecule type" value="Genomic_DNA"/>
</dbReference>
<dbReference type="RefSeq" id="WP_010922635.1">
    <property type="nucleotide sequence ID" value="NC_006086.1"/>
</dbReference>
<dbReference type="SMR" id="Q5XA52"/>
<dbReference type="KEGG" id="spa:M6_Spy1576"/>
<dbReference type="HOGENOM" id="CLU_059546_1_0_9"/>
<dbReference type="Proteomes" id="UP000001167">
    <property type="component" value="Chromosome"/>
</dbReference>
<dbReference type="GO" id="GO:0005737">
    <property type="term" value="C:cytoplasm"/>
    <property type="evidence" value="ECO:0007669"/>
    <property type="project" value="UniProtKB-SubCell"/>
</dbReference>
<dbReference type="GO" id="GO:0032299">
    <property type="term" value="C:ribonuclease H2 complex"/>
    <property type="evidence" value="ECO:0007669"/>
    <property type="project" value="TreeGrafter"/>
</dbReference>
<dbReference type="GO" id="GO:0000287">
    <property type="term" value="F:magnesium ion binding"/>
    <property type="evidence" value="ECO:0007669"/>
    <property type="project" value="UniProtKB-UniRule"/>
</dbReference>
<dbReference type="GO" id="GO:0003723">
    <property type="term" value="F:RNA binding"/>
    <property type="evidence" value="ECO:0007669"/>
    <property type="project" value="InterPro"/>
</dbReference>
<dbReference type="GO" id="GO:0004523">
    <property type="term" value="F:RNA-DNA hybrid ribonuclease activity"/>
    <property type="evidence" value="ECO:0007669"/>
    <property type="project" value="UniProtKB-UniRule"/>
</dbReference>
<dbReference type="GO" id="GO:0043137">
    <property type="term" value="P:DNA replication, removal of RNA primer"/>
    <property type="evidence" value="ECO:0007669"/>
    <property type="project" value="TreeGrafter"/>
</dbReference>
<dbReference type="GO" id="GO:0006298">
    <property type="term" value="P:mismatch repair"/>
    <property type="evidence" value="ECO:0007669"/>
    <property type="project" value="TreeGrafter"/>
</dbReference>
<dbReference type="CDD" id="cd06590">
    <property type="entry name" value="RNase_HII_bacteria_HIII_like"/>
    <property type="match status" value="1"/>
</dbReference>
<dbReference type="CDD" id="cd14796">
    <property type="entry name" value="RNAse_HIII_N"/>
    <property type="match status" value="1"/>
</dbReference>
<dbReference type="FunFam" id="3.30.420.10:FF:000047">
    <property type="entry name" value="Ribonuclease HIII"/>
    <property type="match status" value="1"/>
</dbReference>
<dbReference type="Gene3D" id="3.30.420.10">
    <property type="entry name" value="Ribonuclease H-like superfamily/Ribonuclease H"/>
    <property type="match status" value="1"/>
</dbReference>
<dbReference type="Gene3D" id="3.30.310.10">
    <property type="entry name" value="TATA-Binding Protein"/>
    <property type="match status" value="1"/>
</dbReference>
<dbReference type="HAMAP" id="MF_00053">
    <property type="entry name" value="RNase_HIII"/>
    <property type="match status" value="1"/>
</dbReference>
<dbReference type="InterPro" id="IPR001352">
    <property type="entry name" value="RNase_HII/HIII"/>
</dbReference>
<dbReference type="InterPro" id="IPR024567">
    <property type="entry name" value="RNase_HII/HIII_dom"/>
</dbReference>
<dbReference type="InterPro" id="IPR004641">
    <property type="entry name" value="RNase_HIII"/>
</dbReference>
<dbReference type="InterPro" id="IPR024568">
    <property type="entry name" value="RNase_HIII_N"/>
</dbReference>
<dbReference type="InterPro" id="IPR012337">
    <property type="entry name" value="RNaseH-like_sf"/>
</dbReference>
<dbReference type="InterPro" id="IPR036397">
    <property type="entry name" value="RNaseH_sf"/>
</dbReference>
<dbReference type="InterPro" id="IPR012295">
    <property type="entry name" value="TBP_dom_sf"/>
</dbReference>
<dbReference type="NCBIfam" id="TIGR00716">
    <property type="entry name" value="rnhC"/>
    <property type="match status" value="1"/>
</dbReference>
<dbReference type="PANTHER" id="PTHR10954:SF23">
    <property type="entry name" value="RIBONUCLEASE"/>
    <property type="match status" value="1"/>
</dbReference>
<dbReference type="PANTHER" id="PTHR10954">
    <property type="entry name" value="RIBONUCLEASE H2 SUBUNIT A"/>
    <property type="match status" value="1"/>
</dbReference>
<dbReference type="Pfam" id="PF11858">
    <property type="entry name" value="DUF3378"/>
    <property type="match status" value="1"/>
</dbReference>
<dbReference type="Pfam" id="PF01351">
    <property type="entry name" value="RNase_HII"/>
    <property type="match status" value="1"/>
</dbReference>
<dbReference type="PIRSF" id="PIRSF037748">
    <property type="entry name" value="RnhC"/>
    <property type="match status" value="1"/>
</dbReference>
<dbReference type="SUPFAM" id="SSF53098">
    <property type="entry name" value="Ribonuclease H-like"/>
    <property type="match status" value="1"/>
</dbReference>
<dbReference type="PROSITE" id="PS51975">
    <property type="entry name" value="RNASE_H_2"/>
    <property type="match status" value="1"/>
</dbReference>
<accession>Q5XA52</accession>
<proteinExistence type="inferred from homology"/>
<gene>
    <name evidence="1" type="primary">rnhC</name>
    <name type="ordered locus">M6_Spy1576</name>
</gene>
<sequence>MNTLVLKIDAILSKHLKKQLAPYTISSQNTYVAFAAKKNGVTVLLYKSGKLVLQGNGANALAQELNLPVAKTVFEASNNSQDIPIIGSDEVGNGSYFGGIAVVASFVDPKDHSFLKKLGVDDSKKLSDKTIQQIAPLLEKQIPHQSLLLSPKKYNELVGKSKPYNAISIKVALHNQAIFLLLQKGIQPKQIVIDAFTSQSNYEKHLKKEKNHFPNPLTFQEKAESHYLAVAVSSIIARNLFLDNLDQLGQDLGYQLPSGAGSASDKVASQLLAAYGMSSLEYSAKLHFANTHKAQALLTK</sequence>